<keyword id="KW-0548">Nucleotidyltransferase</keyword>
<keyword id="KW-0694">RNA-binding</keyword>
<keyword id="KW-0698">rRNA processing</keyword>
<keyword id="KW-0808">Transferase</keyword>
<keyword id="KW-0819">tRNA processing</keyword>
<keyword id="KW-0820">tRNA-binding</keyword>
<organism>
    <name type="scientific">Azotobacter vinelandii (strain DJ / ATCC BAA-1303)</name>
    <dbReference type="NCBI Taxonomy" id="322710"/>
    <lineage>
        <taxon>Bacteria</taxon>
        <taxon>Pseudomonadati</taxon>
        <taxon>Pseudomonadota</taxon>
        <taxon>Gammaproteobacteria</taxon>
        <taxon>Pseudomonadales</taxon>
        <taxon>Pseudomonadaceae</taxon>
        <taxon>Azotobacter</taxon>
    </lineage>
</organism>
<sequence length="239" mass="25826">MKRPSGRAPHQLRPIRITRNYTRHAEGSVLVEFGDTRVICTVSAEAGVPRFLKGQGKGWLTAEYGMLPRATGERMAREASRGRQGGRTLEIQRLIGRSLRAALDMSKLGENTLYVDCDVIQADGGTRTASITGAMVALVDALAVLKKRGALKGDPLKQMVAAVSVGIYQGEPILDLDYPEDSDAETDLNVVMTDAGGFIEVQGTAEGEPFQPEELNAMLALATQGIRELFELQRAVLAD</sequence>
<name>RNPH_AZOVD</name>
<accession>C1DI48</accession>
<protein>
    <recommendedName>
        <fullName evidence="1">Ribonuclease PH</fullName>
        <shortName evidence="1">RNase PH</shortName>
        <ecNumber evidence="1">2.7.7.56</ecNumber>
    </recommendedName>
    <alternativeName>
        <fullName evidence="1">tRNA nucleotidyltransferase</fullName>
    </alternativeName>
</protein>
<dbReference type="EC" id="2.7.7.56" evidence="1"/>
<dbReference type="EMBL" id="CP001157">
    <property type="protein sequence ID" value="ACO76545.1"/>
    <property type="molecule type" value="Genomic_DNA"/>
</dbReference>
<dbReference type="RefSeq" id="WP_012698973.1">
    <property type="nucleotide sequence ID" value="NC_012560.1"/>
</dbReference>
<dbReference type="SMR" id="C1DI48"/>
<dbReference type="STRING" id="322710.Avin_02850"/>
<dbReference type="EnsemblBacteria" id="ACO76545">
    <property type="protein sequence ID" value="ACO76545"/>
    <property type="gene ID" value="Avin_02850"/>
</dbReference>
<dbReference type="GeneID" id="88183739"/>
<dbReference type="KEGG" id="avn:Avin_02850"/>
<dbReference type="eggNOG" id="COG0689">
    <property type="taxonomic scope" value="Bacteria"/>
</dbReference>
<dbReference type="HOGENOM" id="CLU_050858_0_0_6"/>
<dbReference type="OrthoDB" id="9802265at2"/>
<dbReference type="Proteomes" id="UP000002424">
    <property type="component" value="Chromosome"/>
</dbReference>
<dbReference type="GO" id="GO:0000175">
    <property type="term" value="F:3'-5'-RNA exonuclease activity"/>
    <property type="evidence" value="ECO:0007669"/>
    <property type="project" value="UniProtKB-UniRule"/>
</dbReference>
<dbReference type="GO" id="GO:0000049">
    <property type="term" value="F:tRNA binding"/>
    <property type="evidence" value="ECO:0007669"/>
    <property type="project" value="UniProtKB-UniRule"/>
</dbReference>
<dbReference type="GO" id="GO:0009022">
    <property type="term" value="F:tRNA nucleotidyltransferase activity"/>
    <property type="evidence" value="ECO:0007669"/>
    <property type="project" value="UniProtKB-UniRule"/>
</dbReference>
<dbReference type="GO" id="GO:0016075">
    <property type="term" value="P:rRNA catabolic process"/>
    <property type="evidence" value="ECO:0007669"/>
    <property type="project" value="UniProtKB-UniRule"/>
</dbReference>
<dbReference type="GO" id="GO:0006364">
    <property type="term" value="P:rRNA processing"/>
    <property type="evidence" value="ECO:0007669"/>
    <property type="project" value="UniProtKB-KW"/>
</dbReference>
<dbReference type="GO" id="GO:0008033">
    <property type="term" value="P:tRNA processing"/>
    <property type="evidence" value="ECO:0007669"/>
    <property type="project" value="UniProtKB-UniRule"/>
</dbReference>
<dbReference type="CDD" id="cd11362">
    <property type="entry name" value="RNase_PH_bact"/>
    <property type="match status" value="1"/>
</dbReference>
<dbReference type="FunFam" id="3.30.230.70:FF:000003">
    <property type="entry name" value="Ribonuclease PH"/>
    <property type="match status" value="1"/>
</dbReference>
<dbReference type="Gene3D" id="3.30.230.70">
    <property type="entry name" value="GHMP Kinase, N-terminal domain"/>
    <property type="match status" value="1"/>
</dbReference>
<dbReference type="HAMAP" id="MF_00564">
    <property type="entry name" value="RNase_PH"/>
    <property type="match status" value="1"/>
</dbReference>
<dbReference type="InterPro" id="IPR001247">
    <property type="entry name" value="ExoRNase_PH_dom1"/>
</dbReference>
<dbReference type="InterPro" id="IPR015847">
    <property type="entry name" value="ExoRNase_PH_dom2"/>
</dbReference>
<dbReference type="InterPro" id="IPR036345">
    <property type="entry name" value="ExoRNase_PH_dom2_sf"/>
</dbReference>
<dbReference type="InterPro" id="IPR027408">
    <property type="entry name" value="PNPase/RNase_PH_dom_sf"/>
</dbReference>
<dbReference type="InterPro" id="IPR020568">
    <property type="entry name" value="Ribosomal_Su5_D2-typ_SF"/>
</dbReference>
<dbReference type="InterPro" id="IPR050080">
    <property type="entry name" value="RNase_PH"/>
</dbReference>
<dbReference type="InterPro" id="IPR002381">
    <property type="entry name" value="RNase_PH_bac-type"/>
</dbReference>
<dbReference type="InterPro" id="IPR018336">
    <property type="entry name" value="RNase_PH_CS"/>
</dbReference>
<dbReference type="NCBIfam" id="TIGR01966">
    <property type="entry name" value="RNasePH"/>
    <property type="match status" value="1"/>
</dbReference>
<dbReference type="PANTHER" id="PTHR11953">
    <property type="entry name" value="EXOSOME COMPLEX COMPONENT"/>
    <property type="match status" value="1"/>
</dbReference>
<dbReference type="PANTHER" id="PTHR11953:SF0">
    <property type="entry name" value="EXOSOME COMPLEX COMPONENT RRP41"/>
    <property type="match status" value="1"/>
</dbReference>
<dbReference type="Pfam" id="PF01138">
    <property type="entry name" value="RNase_PH"/>
    <property type="match status" value="1"/>
</dbReference>
<dbReference type="Pfam" id="PF03725">
    <property type="entry name" value="RNase_PH_C"/>
    <property type="match status" value="1"/>
</dbReference>
<dbReference type="SUPFAM" id="SSF55666">
    <property type="entry name" value="Ribonuclease PH domain 2-like"/>
    <property type="match status" value="1"/>
</dbReference>
<dbReference type="SUPFAM" id="SSF54211">
    <property type="entry name" value="Ribosomal protein S5 domain 2-like"/>
    <property type="match status" value="1"/>
</dbReference>
<dbReference type="PROSITE" id="PS01277">
    <property type="entry name" value="RIBONUCLEASE_PH"/>
    <property type="match status" value="1"/>
</dbReference>
<comment type="function">
    <text evidence="1">Phosphorolytic 3'-5' exoribonuclease that plays an important role in tRNA 3'-end maturation. Removes nucleotide residues following the 3'-CCA terminus of tRNAs; can also add nucleotides to the ends of RNA molecules by using nucleoside diphosphates as substrates, but this may not be physiologically important. Probably plays a role in initiation of 16S rRNA degradation (leading to ribosome degradation) during starvation.</text>
</comment>
<comment type="catalytic activity">
    <reaction evidence="1">
        <text>tRNA(n+1) + phosphate = tRNA(n) + a ribonucleoside 5'-diphosphate</text>
        <dbReference type="Rhea" id="RHEA:10628"/>
        <dbReference type="Rhea" id="RHEA-COMP:17343"/>
        <dbReference type="Rhea" id="RHEA-COMP:17344"/>
        <dbReference type="ChEBI" id="CHEBI:43474"/>
        <dbReference type="ChEBI" id="CHEBI:57930"/>
        <dbReference type="ChEBI" id="CHEBI:173114"/>
        <dbReference type="EC" id="2.7.7.56"/>
    </reaction>
</comment>
<comment type="subunit">
    <text evidence="1">Homohexameric ring arranged as a trimer of dimers.</text>
</comment>
<comment type="similarity">
    <text evidence="1">Belongs to the RNase PH family.</text>
</comment>
<proteinExistence type="inferred from homology"/>
<feature type="chain" id="PRO_1000212059" description="Ribonuclease PH">
    <location>
        <begin position="1"/>
        <end position="239"/>
    </location>
</feature>
<feature type="binding site" evidence="1">
    <location>
        <position position="87"/>
    </location>
    <ligand>
        <name>phosphate</name>
        <dbReference type="ChEBI" id="CHEBI:43474"/>
        <note>substrate</note>
    </ligand>
</feature>
<feature type="binding site" evidence="1">
    <location>
        <begin position="125"/>
        <end position="127"/>
    </location>
    <ligand>
        <name>phosphate</name>
        <dbReference type="ChEBI" id="CHEBI:43474"/>
        <note>substrate</note>
    </ligand>
</feature>
<evidence type="ECO:0000255" key="1">
    <source>
        <dbReference type="HAMAP-Rule" id="MF_00564"/>
    </source>
</evidence>
<gene>
    <name evidence="1" type="primary">rph</name>
    <name type="ordered locus">Avin_02850</name>
</gene>
<reference key="1">
    <citation type="journal article" date="2009" name="J. Bacteriol.">
        <title>Genome sequence of Azotobacter vinelandii, an obligate aerobe specialized to support diverse anaerobic metabolic processes.</title>
        <authorList>
            <person name="Setubal J.C."/>
            <person name="Dos Santos P."/>
            <person name="Goldman B.S."/>
            <person name="Ertesvaag H."/>
            <person name="Espin G."/>
            <person name="Rubio L.M."/>
            <person name="Valla S."/>
            <person name="Almeida N.F."/>
            <person name="Balasubramanian D."/>
            <person name="Cromes L."/>
            <person name="Curatti L."/>
            <person name="Du Z."/>
            <person name="Godsy E."/>
            <person name="Goodner B."/>
            <person name="Hellner-Burris K."/>
            <person name="Hernandez J.A."/>
            <person name="Houmiel K."/>
            <person name="Imperial J."/>
            <person name="Kennedy C."/>
            <person name="Larson T.J."/>
            <person name="Latreille P."/>
            <person name="Ligon L.S."/>
            <person name="Lu J."/>
            <person name="Maerk M."/>
            <person name="Miller N.M."/>
            <person name="Norton S."/>
            <person name="O'Carroll I.P."/>
            <person name="Paulsen I."/>
            <person name="Raulfs E.C."/>
            <person name="Roemer R."/>
            <person name="Rosser J."/>
            <person name="Segura D."/>
            <person name="Slater S."/>
            <person name="Stricklin S.L."/>
            <person name="Studholme D.J."/>
            <person name="Sun J."/>
            <person name="Viana C.J."/>
            <person name="Wallin E."/>
            <person name="Wang B."/>
            <person name="Wheeler C."/>
            <person name="Zhu H."/>
            <person name="Dean D.R."/>
            <person name="Dixon R."/>
            <person name="Wood D."/>
        </authorList>
    </citation>
    <scope>NUCLEOTIDE SEQUENCE [LARGE SCALE GENOMIC DNA]</scope>
    <source>
        <strain>DJ / ATCC BAA-1303</strain>
    </source>
</reference>